<name>Y1682_STRP6</name>
<reference key="1">
    <citation type="journal article" date="2004" name="J. Infect. Dis.">
        <title>Progress toward characterization of the group A Streptococcus metagenome: complete genome sequence of a macrolide-resistant serotype M6 strain.</title>
        <authorList>
            <person name="Banks D.J."/>
            <person name="Porcella S.F."/>
            <person name="Barbian K.D."/>
            <person name="Beres S.B."/>
            <person name="Philips L.E."/>
            <person name="Voyich J.M."/>
            <person name="DeLeo F.R."/>
            <person name="Martin J.M."/>
            <person name="Somerville G.A."/>
            <person name="Musser J.M."/>
        </authorList>
    </citation>
    <scope>NUCLEOTIDE SEQUENCE [LARGE SCALE GENOMIC DNA]</scope>
    <source>
        <strain>ATCC BAA-946 / MGAS10394</strain>
    </source>
</reference>
<evidence type="ECO:0000255" key="1"/>
<evidence type="ECO:0000255" key="2">
    <source>
        <dbReference type="PROSITE-ProRule" id="PRU10095"/>
    </source>
</evidence>
<evidence type="ECO:0000305" key="3"/>
<accession>Q5X9U6</accession>
<feature type="chain" id="PRO_0000088470" description="Putative zinc metalloprotease M6_Spy1682">
    <location>
        <begin position="1"/>
        <end position="419"/>
    </location>
</feature>
<feature type="transmembrane region" description="Helical" evidence="1">
    <location>
        <begin position="169"/>
        <end position="191"/>
    </location>
</feature>
<feature type="transmembrane region" description="Helical" evidence="1">
    <location>
        <begin position="301"/>
        <end position="323"/>
    </location>
</feature>
<feature type="transmembrane region" description="Helical" evidence="1">
    <location>
        <begin position="343"/>
        <end position="365"/>
    </location>
</feature>
<feature type="transmembrane region" description="Helical" evidence="1">
    <location>
        <begin position="392"/>
        <end position="411"/>
    </location>
</feature>
<feature type="domain" description="PDZ">
    <location>
        <begin position="175"/>
        <end position="274"/>
    </location>
</feature>
<feature type="active site" evidence="2">
    <location>
        <position position="19"/>
    </location>
</feature>
<feature type="binding site" evidence="2">
    <location>
        <position position="18"/>
    </location>
    <ligand>
        <name>Zn(2+)</name>
        <dbReference type="ChEBI" id="CHEBI:29105"/>
        <note>catalytic</note>
    </ligand>
</feature>
<feature type="binding site" evidence="2">
    <location>
        <position position="22"/>
    </location>
    <ligand>
        <name>Zn(2+)</name>
        <dbReference type="ChEBI" id="CHEBI:29105"/>
        <note>catalytic</note>
    </ligand>
</feature>
<organism>
    <name type="scientific">Streptococcus pyogenes serotype M6 (strain ATCC BAA-946 / MGAS10394)</name>
    <dbReference type="NCBI Taxonomy" id="286636"/>
    <lineage>
        <taxon>Bacteria</taxon>
        <taxon>Bacillati</taxon>
        <taxon>Bacillota</taxon>
        <taxon>Bacilli</taxon>
        <taxon>Lactobacillales</taxon>
        <taxon>Streptococcaceae</taxon>
        <taxon>Streptococcus</taxon>
    </lineage>
</organism>
<protein>
    <recommendedName>
        <fullName>Putative zinc metalloprotease M6_Spy1682</fullName>
        <ecNumber>3.4.24.-</ecNumber>
    </recommendedName>
</protein>
<comment type="cofactor">
    <cofactor evidence="3">
        <name>Zn(2+)</name>
        <dbReference type="ChEBI" id="CHEBI:29105"/>
    </cofactor>
</comment>
<comment type="subcellular location">
    <subcellularLocation>
        <location evidence="3">Cell membrane</location>
        <topology evidence="3">Multi-pass membrane protein</topology>
    </subcellularLocation>
</comment>
<comment type="similarity">
    <text evidence="3">Belongs to the peptidase M50B family.</text>
</comment>
<sequence length="419" mass="45620">MLGIITFIIIFGILVIVHEFGHFYFAKKSGILVREFAIGMGPKIFSHVDQGGTLYTLRMLPLGGYVRMAGWGDDKTEIKTGTPASLTLNEQGFVKRINLSQSKLDPTSLPMHVTGYDLEDQLSITGLVLEETKTYKVAHDATIVEEDGTEIRIAPLDVQYQNASIGGRLITNFAGPMNNFILGIVVFILLVFLQGGMPDFSSNHVGVQENGAAAKAGLRDNDQIVAINGYKVTSWNDLTEAVDLATRDLGPSQTIKVTYKSHQRLKTVAVKPQKHAKTYTIGVKASLKTGFKDKLLGGLELAWSGAFTILNALKGLITGFSLNKLGGPVAMYDMSNQAAQNGLESVLSLMAMLSINLGIFNLIPIPALDGGKILMNIIEAIRRKPIKQETEAYITLAGVAIMVVLMIAVTWNDIMRVFF</sequence>
<keyword id="KW-1003">Cell membrane</keyword>
<keyword id="KW-0378">Hydrolase</keyword>
<keyword id="KW-0472">Membrane</keyword>
<keyword id="KW-0479">Metal-binding</keyword>
<keyword id="KW-0482">Metalloprotease</keyword>
<keyword id="KW-0645">Protease</keyword>
<keyword id="KW-0812">Transmembrane</keyword>
<keyword id="KW-1133">Transmembrane helix</keyword>
<keyword id="KW-0862">Zinc</keyword>
<gene>
    <name type="ordered locus">M6_Spy1682</name>
</gene>
<proteinExistence type="inferred from homology"/>
<dbReference type="EC" id="3.4.24.-"/>
<dbReference type="EMBL" id="CP000003">
    <property type="protein sequence ID" value="AAT87817.1"/>
    <property type="molecule type" value="Genomic_DNA"/>
</dbReference>
<dbReference type="SMR" id="Q5X9U6"/>
<dbReference type="KEGG" id="spa:M6_Spy1682"/>
<dbReference type="HOGENOM" id="CLU_025778_1_0_9"/>
<dbReference type="Proteomes" id="UP000001167">
    <property type="component" value="Chromosome"/>
</dbReference>
<dbReference type="GO" id="GO:0005886">
    <property type="term" value="C:plasma membrane"/>
    <property type="evidence" value="ECO:0007669"/>
    <property type="project" value="UniProtKB-SubCell"/>
</dbReference>
<dbReference type="GO" id="GO:0046872">
    <property type="term" value="F:metal ion binding"/>
    <property type="evidence" value="ECO:0007669"/>
    <property type="project" value="UniProtKB-KW"/>
</dbReference>
<dbReference type="GO" id="GO:0004222">
    <property type="term" value="F:metalloendopeptidase activity"/>
    <property type="evidence" value="ECO:0007669"/>
    <property type="project" value="InterPro"/>
</dbReference>
<dbReference type="GO" id="GO:0006508">
    <property type="term" value="P:proteolysis"/>
    <property type="evidence" value="ECO:0007669"/>
    <property type="project" value="UniProtKB-KW"/>
</dbReference>
<dbReference type="CDD" id="cd06163">
    <property type="entry name" value="S2P-M50_PDZ_RseP-like"/>
    <property type="match status" value="1"/>
</dbReference>
<dbReference type="Gene3D" id="2.30.42.10">
    <property type="match status" value="1"/>
</dbReference>
<dbReference type="InterPro" id="IPR041489">
    <property type="entry name" value="PDZ_6"/>
</dbReference>
<dbReference type="InterPro" id="IPR036034">
    <property type="entry name" value="PDZ_sf"/>
</dbReference>
<dbReference type="InterPro" id="IPR004387">
    <property type="entry name" value="Pept_M50_Zn"/>
</dbReference>
<dbReference type="InterPro" id="IPR008915">
    <property type="entry name" value="Peptidase_M50"/>
</dbReference>
<dbReference type="NCBIfam" id="TIGR00054">
    <property type="entry name" value="RIP metalloprotease RseP"/>
    <property type="match status" value="1"/>
</dbReference>
<dbReference type="PANTHER" id="PTHR42837:SF2">
    <property type="entry name" value="MEMBRANE METALLOPROTEASE ARASP2, CHLOROPLASTIC-RELATED"/>
    <property type="match status" value="1"/>
</dbReference>
<dbReference type="PANTHER" id="PTHR42837">
    <property type="entry name" value="REGULATOR OF SIGMA-E PROTEASE RSEP"/>
    <property type="match status" value="1"/>
</dbReference>
<dbReference type="Pfam" id="PF17820">
    <property type="entry name" value="PDZ_6"/>
    <property type="match status" value="1"/>
</dbReference>
<dbReference type="Pfam" id="PF02163">
    <property type="entry name" value="Peptidase_M50"/>
    <property type="match status" value="1"/>
</dbReference>
<dbReference type="SUPFAM" id="SSF50156">
    <property type="entry name" value="PDZ domain-like"/>
    <property type="match status" value="1"/>
</dbReference>
<dbReference type="PROSITE" id="PS00142">
    <property type="entry name" value="ZINC_PROTEASE"/>
    <property type="match status" value="1"/>
</dbReference>